<evidence type="ECO:0000255" key="1">
    <source>
        <dbReference type="HAMAP-Rule" id="MF_01320"/>
    </source>
</evidence>
<evidence type="ECO:0000256" key="2">
    <source>
        <dbReference type="SAM" id="MobiDB-lite"/>
    </source>
</evidence>
<evidence type="ECO:0000305" key="3"/>
<protein>
    <recommendedName>
        <fullName evidence="1">Large ribosomal subunit protein uL2</fullName>
    </recommendedName>
    <alternativeName>
        <fullName evidence="3">50S ribosomal protein L2</fullName>
    </alternativeName>
</protein>
<name>RL2_HELAH</name>
<dbReference type="EMBL" id="AM260522">
    <property type="protein sequence ID" value="CAJ98991.1"/>
    <property type="molecule type" value="Genomic_DNA"/>
</dbReference>
<dbReference type="RefSeq" id="WP_011577111.1">
    <property type="nucleotide sequence ID" value="NC_008229.1"/>
</dbReference>
<dbReference type="SMR" id="Q17ZD5"/>
<dbReference type="STRING" id="382638.Hac_0139"/>
<dbReference type="GeneID" id="31757668"/>
<dbReference type="KEGG" id="hac:Hac_0139"/>
<dbReference type="eggNOG" id="COG0090">
    <property type="taxonomic scope" value="Bacteria"/>
</dbReference>
<dbReference type="HOGENOM" id="CLU_036235_2_1_7"/>
<dbReference type="OrthoDB" id="9778722at2"/>
<dbReference type="BioCyc" id="HACI382638:HAC_RS00595-MONOMER"/>
<dbReference type="Proteomes" id="UP000000775">
    <property type="component" value="Chromosome"/>
</dbReference>
<dbReference type="GO" id="GO:0015934">
    <property type="term" value="C:large ribosomal subunit"/>
    <property type="evidence" value="ECO:0007669"/>
    <property type="project" value="InterPro"/>
</dbReference>
<dbReference type="GO" id="GO:0019843">
    <property type="term" value="F:rRNA binding"/>
    <property type="evidence" value="ECO:0007669"/>
    <property type="project" value="UniProtKB-UniRule"/>
</dbReference>
<dbReference type="GO" id="GO:0003735">
    <property type="term" value="F:structural constituent of ribosome"/>
    <property type="evidence" value="ECO:0007669"/>
    <property type="project" value="InterPro"/>
</dbReference>
<dbReference type="GO" id="GO:0016740">
    <property type="term" value="F:transferase activity"/>
    <property type="evidence" value="ECO:0007669"/>
    <property type="project" value="InterPro"/>
</dbReference>
<dbReference type="GO" id="GO:0002181">
    <property type="term" value="P:cytoplasmic translation"/>
    <property type="evidence" value="ECO:0007669"/>
    <property type="project" value="TreeGrafter"/>
</dbReference>
<dbReference type="FunFam" id="2.30.30.30:FF:000001">
    <property type="entry name" value="50S ribosomal protein L2"/>
    <property type="match status" value="1"/>
</dbReference>
<dbReference type="FunFam" id="2.40.50.140:FF:000003">
    <property type="entry name" value="50S ribosomal protein L2"/>
    <property type="match status" value="1"/>
</dbReference>
<dbReference type="FunFam" id="4.10.950.10:FF:000001">
    <property type="entry name" value="50S ribosomal protein L2"/>
    <property type="match status" value="1"/>
</dbReference>
<dbReference type="Gene3D" id="2.30.30.30">
    <property type="match status" value="1"/>
</dbReference>
<dbReference type="Gene3D" id="2.40.50.140">
    <property type="entry name" value="Nucleic acid-binding proteins"/>
    <property type="match status" value="1"/>
</dbReference>
<dbReference type="Gene3D" id="4.10.950.10">
    <property type="entry name" value="Ribosomal protein L2, domain 3"/>
    <property type="match status" value="1"/>
</dbReference>
<dbReference type="HAMAP" id="MF_01320_B">
    <property type="entry name" value="Ribosomal_uL2_B"/>
    <property type="match status" value="1"/>
</dbReference>
<dbReference type="InterPro" id="IPR012340">
    <property type="entry name" value="NA-bd_OB-fold"/>
</dbReference>
<dbReference type="InterPro" id="IPR014722">
    <property type="entry name" value="Rib_uL2_dom2"/>
</dbReference>
<dbReference type="InterPro" id="IPR002171">
    <property type="entry name" value="Ribosomal_uL2"/>
</dbReference>
<dbReference type="InterPro" id="IPR005880">
    <property type="entry name" value="Ribosomal_uL2_bac/org-type"/>
</dbReference>
<dbReference type="InterPro" id="IPR022669">
    <property type="entry name" value="Ribosomal_uL2_C"/>
</dbReference>
<dbReference type="InterPro" id="IPR022671">
    <property type="entry name" value="Ribosomal_uL2_CS"/>
</dbReference>
<dbReference type="InterPro" id="IPR014726">
    <property type="entry name" value="Ribosomal_uL2_dom3"/>
</dbReference>
<dbReference type="InterPro" id="IPR022666">
    <property type="entry name" value="Ribosomal_uL2_RNA-bd_dom"/>
</dbReference>
<dbReference type="InterPro" id="IPR008991">
    <property type="entry name" value="Translation_prot_SH3-like_sf"/>
</dbReference>
<dbReference type="NCBIfam" id="TIGR01171">
    <property type="entry name" value="rplB_bact"/>
    <property type="match status" value="1"/>
</dbReference>
<dbReference type="PANTHER" id="PTHR13691:SF5">
    <property type="entry name" value="LARGE RIBOSOMAL SUBUNIT PROTEIN UL2M"/>
    <property type="match status" value="1"/>
</dbReference>
<dbReference type="PANTHER" id="PTHR13691">
    <property type="entry name" value="RIBOSOMAL PROTEIN L2"/>
    <property type="match status" value="1"/>
</dbReference>
<dbReference type="Pfam" id="PF00181">
    <property type="entry name" value="Ribosomal_L2"/>
    <property type="match status" value="1"/>
</dbReference>
<dbReference type="Pfam" id="PF03947">
    <property type="entry name" value="Ribosomal_L2_C"/>
    <property type="match status" value="1"/>
</dbReference>
<dbReference type="PIRSF" id="PIRSF002158">
    <property type="entry name" value="Ribosomal_L2"/>
    <property type="match status" value="1"/>
</dbReference>
<dbReference type="SMART" id="SM01383">
    <property type="entry name" value="Ribosomal_L2"/>
    <property type="match status" value="1"/>
</dbReference>
<dbReference type="SMART" id="SM01382">
    <property type="entry name" value="Ribosomal_L2_C"/>
    <property type="match status" value="1"/>
</dbReference>
<dbReference type="SUPFAM" id="SSF50249">
    <property type="entry name" value="Nucleic acid-binding proteins"/>
    <property type="match status" value="1"/>
</dbReference>
<dbReference type="SUPFAM" id="SSF50104">
    <property type="entry name" value="Translation proteins SH3-like domain"/>
    <property type="match status" value="1"/>
</dbReference>
<dbReference type="PROSITE" id="PS00467">
    <property type="entry name" value="RIBOSOMAL_L2"/>
    <property type="match status" value="1"/>
</dbReference>
<gene>
    <name evidence="1" type="primary">rplB</name>
    <name type="ordered locus">Hac_0139</name>
</gene>
<accession>Q17ZD5</accession>
<comment type="function">
    <text evidence="1">One of the primary rRNA binding proteins. Required for association of the 30S and 50S subunits to form the 70S ribosome, for tRNA binding and peptide bond formation. It has been suggested to have peptidyltransferase activity; this is somewhat controversial. Makes several contacts with the 16S rRNA in the 70S ribosome.</text>
</comment>
<comment type="subunit">
    <text evidence="1">Part of the 50S ribosomal subunit. Forms a bridge to the 30S subunit in the 70S ribosome.</text>
</comment>
<comment type="similarity">
    <text evidence="1">Belongs to the universal ribosomal protein uL2 family.</text>
</comment>
<keyword id="KW-0687">Ribonucleoprotein</keyword>
<keyword id="KW-0689">Ribosomal protein</keyword>
<keyword id="KW-0694">RNA-binding</keyword>
<keyword id="KW-0699">rRNA-binding</keyword>
<reference key="1">
    <citation type="journal article" date="2006" name="PLoS Genet.">
        <title>Who ate whom? Adaptive Helicobacter genomic changes that accompanied a host jump from early humans to large felines.</title>
        <authorList>
            <person name="Eppinger M."/>
            <person name="Baar C."/>
            <person name="Linz B."/>
            <person name="Raddatz G."/>
            <person name="Lanz C."/>
            <person name="Keller H."/>
            <person name="Morelli G."/>
            <person name="Gressmann H."/>
            <person name="Achtman M."/>
            <person name="Schuster S.C."/>
        </authorList>
    </citation>
    <scope>NUCLEOTIDE SEQUENCE [LARGE SCALE GENOMIC DNA]</scope>
    <source>
        <strain>Sheeba</strain>
    </source>
</reference>
<proteinExistence type="inferred from homology"/>
<organism>
    <name type="scientific">Helicobacter acinonychis (strain Sheeba)</name>
    <dbReference type="NCBI Taxonomy" id="382638"/>
    <lineage>
        <taxon>Bacteria</taxon>
        <taxon>Pseudomonadati</taxon>
        <taxon>Campylobacterota</taxon>
        <taxon>Epsilonproteobacteria</taxon>
        <taxon>Campylobacterales</taxon>
        <taxon>Helicobacteraceae</taxon>
        <taxon>Helicobacter</taxon>
    </lineage>
</organism>
<feature type="chain" id="PRO_0000309930" description="Large ribosomal subunit protein uL2">
    <location>
        <begin position="1"/>
        <end position="276"/>
    </location>
</feature>
<feature type="region of interest" description="Disordered" evidence="2">
    <location>
        <begin position="212"/>
        <end position="276"/>
    </location>
</feature>
<feature type="compositionally biased region" description="Basic residues" evidence="2">
    <location>
        <begin position="257"/>
        <end position="276"/>
    </location>
</feature>
<sequence>MAIKTYKPYTPSRRFMSVLDSKDITAKSSVKGLLTKLKATAGRNNNGRITSRHKERGAKKLYRIIDFKRNKYNIEGKVVAIEYDPYRNARIALVVYPDGDKRYILQPSGLKVGDSVIAAEGGLDIKVGFAMKLKNIPIGTVVHNIEMHPGAGGQLARSAGMSAQIMGRENKYTIIRMPSSEMRYILSECMASIGVVGNEDFINVSIGKAGRNRHRGIRPQTRGSAMNPVDHPHGGGEGKTGTSGHPVSPWGTPAKGYKTRKKKASDKLIISRKKHK</sequence>